<name>MDH_RHILO</name>
<organism>
    <name type="scientific">Mesorhizobium japonicum (strain LMG 29417 / CECT 9101 / MAFF 303099)</name>
    <name type="common">Mesorhizobium loti (strain MAFF 303099)</name>
    <dbReference type="NCBI Taxonomy" id="266835"/>
    <lineage>
        <taxon>Bacteria</taxon>
        <taxon>Pseudomonadati</taxon>
        <taxon>Pseudomonadota</taxon>
        <taxon>Alphaproteobacteria</taxon>
        <taxon>Hyphomicrobiales</taxon>
        <taxon>Phyllobacteriaceae</taxon>
        <taxon>Mesorhizobium</taxon>
    </lineage>
</organism>
<proteinExistence type="inferred from homology"/>
<comment type="function">
    <text evidence="1">Catalyzes the reversible oxidation of malate to oxaloacetate.</text>
</comment>
<comment type="catalytic activity">
    <reaction evidence="1">
        <text>(S)-malate + NAD(+) = oxaloacetate + NADH + H(+)</text>
        <dbReference type="Rhea" id="RHEA:21432"/>
        <dbReference type="ChEBI" id="CHEBI:15378"/>
        <dbReference type="ChEBI" id="CHEBI:15589"/>
        <dbReference type="ChEBI" id="CHEBI:16452"/>
        <dbReference type="ChEBI" id="CHEBI:57540"/>
        <dbReference type="ChEBI" id="CHEBI:57945"/>
        <dbReference type="EC" id="1.1.1.37"/>
    </reaction>
</comment>
<comment type="similarity">
    <text evidence="1">Belongs to the LDH/MDH superfamily. MDH type 3 family.</text>
</comment>
<gene>
    <name evidence="1" type="primary">mdh</name>
    <name type="ordered locus">mll4308</name>
</gene>
<dbReference type="EC" id="1.1.1.37" evidence="1"/>
<dbReference type="EMBL" id="BA000012">
    <property type="protein sequence ID" value="BAB50996.1"/>
    <property type="molecule type" value="Genomic_DNA"/>
</dbReference>
<dbReference type="RefSeq" id="WP_010912338.1">
    <property type="nucleotide sequence ID" value="NC_002678.2"/>
</dbReference>
<dbReference type="SMR" id="Q98EC4"/>
<dbReference type="KEGG" id="mlo:mll4308"/>
<dbReference type="PATRIC" id="fig|266835.9.peg.3400"/>
<dbReference type="eggNOG" id="COG0039">
    <property type="taxonomic scope" value="Bacteria"/>
</dbReference>
<dbReference type="HOGENOM" id="CLU_045401_2_1_5"/>
<dbReference type="Proteomes" id="UP000000552">
    <property type="component" value="Chromosome"/>
</dbReference>
<dbReference type="GO" id="GO:0004459">
    <property type="term" value="F:L-lactate dehydrogenase activity"/>
    <property type="evidence" value="ECO:0007669"/>
    <property type="project" value="TreeGrafter"/>
</dbReference>
<dbReference type="GO" id="GO:0030060">
    <property type="term" value="F:L-malate dehydrogenase (NAD+) activity"/>
    <property type="evidence" value="ECO:0007669"/>
    <property type="project" value="UniProtKB-UniRule"/>
</dbReference>
<dbReference type="GO" id="GO:0006089">
    <property type="term" value="P:lactate metabolic process"/>
    <property type="evidence" value="ECO:0007669"/>
    <property type="project" value="TreeGrafter"/>
</dbReference>
<dbReference type="GO" id="GO:0006099">
    <property type="term" value="P:tricarboxylic acid cycle"/>
    <property type="evidence" value="ECO:0007669"/>
    <property type="project" value="UniProtKB-UniRule"/>
</dbReference>
<dbReference type="CDD" id="cd01339">
    <property type="entry name" value="LDH-like_MDH"/>
    <property type="match status" value="1"/>
</dbReference>
<dbReference type="FunFam" id="3.40.50.720:FF:000018">
    <property type="entry name" value="Malate dehydrogenase"/>
    <property type="match status" value="1"/>
</dbReference>
<dbReference type="FunFam" id="3.90.110.10:FF:000004">
    <property type="entry name" value="Malate dehydrogenase"/>
    <property type="match status" value="1"/>
</dbReference>
<dbReference type="Gene3D" id="3.90.110.10">
    <property type="entry name" value="Lactate dehydrogenase/glycoside hydrolase, family 4, C-terminal"/>
    <property type="match status" value="1"/>
</dbReference>
<dbReference type="Gene3D" id="3.40.50.720">
    <property type="entry name" value="NAD(P)-binding Rossmann-like Domain"/>
    <property type="match status" value="1"/>
</dbReference>
<dbReference type="HAMAP" id="MF_00487">
    <property type="entry name" value="Malate_dehydrog_3"/>
    <property type="match status" value="1"/>
</dbReference>
<dbReference type="InterPro" id="IPR001557">
    <property type="entry name" value="L-lactate/malate_DH"/>
</dbReference>
<dbReference type="InterPro" id="IPR022383">
    <property type="entry name" value="Lactate/malate_DH_C"/>
</dbReference>
<dbReference type="InterPro" id="IPR001236">
    <property type="entry name" value="Lactate/malate_DH_N"/>
</dbReference>
<dbReference type="InterPro" id="IPR015955">
    <property type="entry name" value="Lactate_DH/Glyco_Ohase_4_C"/>
</dbReference>
<dbReference type="InterPro" id="IPR011275">
    <property type="entry name" value="Malate_DH_type3"/>
</dbReference>
<dbReference type="InterPro" id="IPR036291">
    <property type="entry name" value="NAD(P)-bd_dom_sf"/>
</dbReference>
<dbReference type="NCBIfam" id="TIGR01763">
    <property type="entry name" value="MalateDH_bact"/>
    <property type="match status" value="1"/>
</dbReference>
<dbReference type="NCBIfam" id="NF004863">
    <property type="entry name" value="PRK06223.1"/>
    <property type="match status" value="1"/>
</dbReference>
<dbReference type="PANTHER" id="PTHR43128">
    <property type="entry name" value="L-2-HYDROXYCARBOXYLATE DEHYDROGENASE (NAD(P)(+))"/>
    <property type="match status" value="1"/>
</dbReference>
<dbReference type="PANTHER" id="PTHR43128:SF16">
    <property type="entry name" value="L-LACTATE DEHYDROGENASE"/>
    <property type="match status" value="1"/>
</dbReference>
<dbReference type="Pfam" id="PF02866">
    <property type="entry name" value="Ldh_1_C"/>
    <property type="match status" value="1"/>
</dbReference>
<dbReference type="Pfam" id="PF00056">
    <property type="entry name" value="Ldh_1_N"/>
    <property type="match status" value="1"/>
</dbReference>
<dbReference type="PIRSF" id="PIRSF000102">
    <property type="entry name" value="Lac_mal_DH"/>
    <property type="match status" value="1"/>
</dbReference>
<dbReference type="PRINTS" id="PR00086">
    <property type="entry name" value="LLDHDRGNASE"/>
</dbReference>
<dbReference type="SUPFAM" id="SSF56327">
    <property type="entry name" value="LDH C-terminal domain-like"/>
    <property type="match status" value="1"/>
</dbReference>
<dbReference type="SUPFAM" id="SSF51735">
    <property type="entry name" value="NAD(P)-binding Rossmann-fold domains"/>
    <property type="match status" value="1"/>
</dbReference>
<keyword id="KW-0520">NAD</keyword>
<keyword id="KW-0560">Oxidoreductase</keyword>
<keyword id="KW-0816">Tricarboxylic acid cycle</keyword>
<protein>
    <recommendedName>
        <fullName evidence="1">Malate dehydrogenase</fullName>
        <ecNumber evidence="1">1.1.1.37</ecNumber>
    </recommendedName>
</protein>
<feature type="chain" id="PRO_0000113461" description="Malate dehydrogenase">
    <location>
        <begin position="1"/>
        <end position="322"/>
    </location>
</feature>
<feature type="active site" description="Proton acceptor" evidence="1">
    <location>
        <position position="176"/>
    </location>
</feature>
<feature type="binding site" evidence="1">
    <location>
        <begin position="10"/>
        <end position="15"/>
    </location>
    <ligand>
        <name>NAD(+)</name>
        <dbReference type="ChEBI" id="CHEBI:57540"/>
    </ligand>
</feature>
<feature type="binding site" evidence="1">
    <location>
        <position position="34"/>
    </location>
    <ligand>
        <name>NAD(+)</name>
        <dbReference type="ChEBI" id="CHEBI:57540"/>
    </ligand>
</feature>
<feature type="binding site" evidence="1">
    <location>
        <position position="83"/>
    </location>
    <ligand>
        <name>substrate</name>
    </ligand>
</feature>
<feature type="binding site" evidence="1">
    <location>
        <position position="89"/>
    </location>
    <ligand>
        <name>substrate</name>
    </ligand>
</feature>
<feature type="binding site" evidence="1">
    <location>
        <position position="96"/>
    </location>
    <ligand>
        <name>NAD(+)</name>
        <dbReference type="ChEBI" id="CHEBI:57540"/>
    </ligand>
</feature>
<feature type="binding site" evidence="1">
    <location>
        <begin position="119"/>
        <end position="121"/>
    </location>
    <ligand>
        <name>NAD(+)</name>
        <dbReference type="ChEBI" id="CHEBI:57540"/>
    </ligand>
</feature>
<feature type="binding site" evidence="1">
    <location>
        <position position="121"/>
    </location>
    <ligand>
        <name>substrate</name>
    </ligand>
</feature>
<feature type="binding site" evidence="1">
    <location>
        <position position="152"/>
    </location>
    <ligand>
        <name>substrate</name>
    </ligand>
</feature>
<accession>Q98EC4</accession>
<reference key="1">
    <citation type="journal article" date="2000" name="DNA Res.">
        <title>Complete genome structure of the nitrogen-fixing symbiotic bacterium Mesorhizobium loti.</title>
        <authorList>
            <person name="Kaneko T."/>
            <person name="Nakamura Y."/>
            <person name="Sato S."/>
            <person name="Asamizu E."/>
            <person name="Kato T."/>
            <person name="Sasamoto S."/>
            <person name="Watanabe A."/>
            <person name="Idesawa K."/>
            <person name="Ishikawa A."/>
            <person name="Kawashima K."/>
            <person name="Kimura T."/>
            <person name="Kishida Y."/>
            <person name="Kiyokawa C."/>
            <person name="Kohara M."/>
            <person name="Matsumoto M."/>
            <person name="Matsuno A."/>
            <person name="Mochizuki Y."/>
            <person name="Nakayama S."/>
            <person name="Nakazaki N."/>
            <person name="Shimpo S."/>
            <person name="Sugimoto M."/>
            <person name="Takeuchi C."/>
            <person name="Yamada M."/>
            <person name="Tabata S."/>
        </authorList>
    </citation>
    <scope>NUCLEOTIDE SEQUENCE [LARGE SCALE GENOMIC DNA]</scope>
    <source>
        <strain>LMG 29417 / CECT 9101 / MAFF 303099</strain>
    </source>
</reference>
<sequence>MARNKIALIGSGMIGGTLAHMIGLKDLGDVVLFDIAEGIPQGKGLDIAQSSPVDGFDSRLTGVNDYAGIEGADVCIVTAGVPRKPGMSRDDLLGINLKVMEQVGAGLKKYAPKAFVICITNPLDAMVWALQKFSGLPKTHVVGMAGVLDSARFRYFLAEEFKVSVEDVTAFVLGGHGDSMVPMIRYSTVSGIPLPDLVKMGWTSKEKLDQIVQRTRDGGAEIVGLLKTGSAYYAPAASAIAMAESYLKDKKRVLPCAAHLSGQYGVKGTYVGVPVVIGAGGVERIIEIDLNKSEQKMFESSVATVQGLTEACVKIAPQLASK</sequence>
<evidence type="ECO:0000255" key="1">
    <source>
        <dbReference type="HAMAP-Rule" id="MF_00487"/>
    </source>
</evidence>